<feature type="chain" id="PRO_1000140431" description="D-tagatose-1,6-bisphosphate aldolase subunit KbaY">
    <location>
        <begin position="1"/>
        <end position="286"/>
    </location>
</feature>
<feature type="active site" description="Proton donor" evidence="1">
    <location>
        <position position="82"/>
    </location>
</feature>
<feature type="binding site" evidence="1">
    <location>
        <position position="83"/>
    </location>
    <ligand>
        <name>Zn(2+)</name>
        <dbReference type="ChEBI" id="CHEBI:29105"/>
        <note>catalytic</note>
    </ligand>
</feature>
<feature type="binding site" evidence="1">
    <location>
        <position position="180"/>
    </location>
    <ligand>
        <name>Zn(2+)</name>
        <dbReference type="ChEBI" id="CHEBI:29105"/>
        <note>catalytic</note>
    </ligand>
</feature>
<feature type="binding site" evidence="1">
    <location>
        <position position="181"/>
    </location>
    <ligand>
        <name>dihydroxyacetone phosphate</name>
        <dbReference type="ChEBI" id="CHEBI:57642"/>
    </ligand>
</feature>
<feature type="binding site" evidence="1">
    <location>
        <position position="208"/>
    </location>
    <ligand>
        <name>Zn(2+)</name>
        <dbReference type="ChEBI" id="CHEBI:29105"/>
        <note>catalytic</note>
    </ligand>
</feature>
<feature type="binding site" evidence="1">
    <location>
        <begin position="209"/>
        <end position="211"/>
    </location>
    <ligand>
        <name>dihydroxyacetone phosphate</name>
        <dbReference type="ChEBI" id="CHEBI:57642"/>
    </ligand>
</feature>
<feature type="binding site" evidence="1">
    <location>
        <begin position="230"/>
        <end position="233"/>
    </location>
    <ligand>
        <name>dihydroxyacetone phosphate</name>
        <dbReference type="ChEBI" id="CHEBI:57642"/>
    </ligand>
</feature>
<reference key="1">
    <citation type="journal article" date="2009" name="PLoS Genet.">
        <title>Organised genome dynamics in the Escherichia coli species results in highly diverse adaptive paths.</title>
        <authorList>
            <person name="Touchon M."/>
            <person name="Hoede C."/>
            <person name="Tenaillon O."/>
            <person name="Barbe V."/>
            <person name="Baeriswyl S."/>
            <person name="Bidet P."/>
            <person name="Bingen E."/>
            <person name="Bonacorsi S."/>
            <person name="Bouchier C."/>
            <person name="Bouvet O."/>
            <person name="Calteau A."/>
            <person name="Chiapello H."/>
            <person name="Clermont O."/>
            <person name="Cruveiller S."/>
            <person name="Danchin A."/>
            <person name="Diard M."/>
            <person name="Dossat C."/>
            <person name="Karoui M.E."/>
            <person name="Frapy E."/>
            <person name="Garry L."/>
            <person name="Ghigo J.M."/>
            <person name="Gilles A.M."/>
            <person name="Johnson J."/>
            <person name="Le Bouguenec C."/>
            <person name="Lescat M."/>
            <person name="Mangenot S."/>
            <person name="Martinez-Jehanne V."/>
            <person name="Matic I."/>
            <person name="Nassif X."/>
            <person name="Oztas S."/>
            <person name="Petit M.A."/>
            <person name="Pichon C."/>
            <person name="Rouy Z."/>
            <person name="Ruf C.S."/>
            <person name="Schneider D."/>
            <person name="Tourret J."/>
            <person name="Vacherie B."/>
            <person name="Vallenet D."/>
            <person name="Medigue C."/>
            <person name="Rocha E.P.C."/>
            <person name="Denamur E."/>
        </authorList>
    </citation>
    <scope>NUCLEOTIDE SEQUENCE [LARGE SCALE GENOMIC DNA]</scope>
    <source>
        <strain>IAI1</strain>
    </source>
</reference>
<keyword id="KW-0456">Lyase</keyword>
<keyword id="KW-0479">Metal-binding</keyword>
<keyword id="KW-0862">Zinc</keyword>
<evidence type="ECO:0000255" key="1">
    <source>
        <dbReference type="HAMAP-Rule" id="MF_01293"/>
    </source>
</evidence>
<comment type="function">
    <text evidence="1">Catalytic subunit of the tagatose-1,6-bisphosphate aldolase KbaYZ, which catalyzes the reversible aldol condensation of dihydroxyacetone phosphate (DHAP or glycerone-phosphate) with glyceraldehyde 3-phosphate (G3P) to produce tagatose 1,6-bisphosphate (TBP). Requires KbaZ subunit for full activity and stability.</text>
</comment>
<comment type="catalytic activity">
    <reaction evidence="1">
        <text>D-tagatofuranose 1,6-bisphosphate = D-glyceraldehyde 3-phosphate + dihydroxyacetone phosphate</text>
        <dbReference type="Rhea" id="RHEA:22948"/>
        <dbReference type="ChEBI" id="CHEBI:57642"/>
        <dbReference type="ChEBI" id="CHEBI:58694"/>
        <dbReference type="ChEBI" id="CHEBI:59776"/>
        <dbReference type="EC" id="4.1.2.40"/>
    </reaction>
</comment>
<comment type="cofactor">
    <cofactor evidence="1">
        <name>Zn(2+)</name>
        <dbReference type="ChEBI" id="CHEBI:29105"/>
    </cofactor>
    <text evidence="1">Binds 1 zinc ion per subunit.</text>
</comment>
<comment type="pathway">
    <text evidence="1">Carbohydrate metabolism; D-tagatose 6-phosphate degradation; D-glyceraldehyde 3-phosphate and glycerone phosphate from D-tagatose 6-phosphate: step 2/2.</text>
</comment>
<comment type="subunit">
    <text evidence="1">Homotetramer. Forms a complex with KbaZ.</text>
</comment>
<comment type="similarity">
    <text evidence="1">Belongs to the class II fructose-bisphosphate aldolase family. TagBP aldolase KbaY subfamily.</text>
</comment>
<gene>
    <name evidence="1" type="primary">kbaY</name>
    <name type="ordered locus">ECIAI1_3287</name>
</gene>
<name>KBAY_ECO8A</name>
<proteinExistence type="inferred from homology"/>
<dbReference type="EC" id="4.1.2.40" evidence="1"/>
<dbReference type="EMBL" id="CU928160">
    <property type="protein sequence ID" value="CAR00101.1"/>
    <property type="molecule type" value="Genomic_DNA"/>
</dbReference>
<dbReference type="RefSeq" id="WP_000022766.1">
    <property type="nucleotide sequence ID" value="NC_011741.1"/>
</dbReference>
<dbReference type="SMR" id="B7M045"/>
<dbReference type="GeneID" id="75203745"/>
<dbReference type="KEGG" id="ecr:ECIAI1_3287"/>
<dbReference type="HOGENOM" id="CLU_040088_0_1_6"/>
<dbReference type="UniPathway" id="UPA00704">
    <property type="reaction ID" value="UER00716"/>
</dbReference>
<dbReference type="GO" id="GO:0005829">
    <property type="term" value="C:cytosol"/>
    <property type="evidence" value="ECO:0007669"/>
    <property type="project" value="TreeGrafter"/>
</dbReference>
<dbReference type="GO" id="GO:0009025">
    <property type="term" value="F:tagatose-bisphosphate aldolase activity"/>
    <property type="evidence" value="ECO:0007669"/>
    <property type="project" value="UniProtKB-UniRule"/>
</dbReference>
<dbReference type="GO" id="GO:0008270">
    <property type="term" value="F:zinc ion binding"/>
    <property type="evidence" value="ECO:0007669"/>
    <property type="project" value="UniProtKB-UniRule"/>
</dbReference>
<dbReference type="GO" id="GO:0005975">
    <property type="term" value="P:carbohydrate metabolic process"/>
    <property type="evidence" value="ECO:0007669"/>
    <property type="project" value="InterPro"/>
</dbReference>
<dbReference type="GO" id="GO:2001059">
    <property type="term" value="P:D-tagatose 6-phosphate catabolic process"/>
    <property type="evidence" value="ECO:0007669"/>
    <property type="project" value="UniProtKB-UniRule"/>
</dbReference>
<dbReference type="CDD" id="cd00453">
    <property type="entry name" value="FTBP_aldolase_II"/>
    <property type="match status" value="1"/>
</dbReference>
<dbReference type="FunFam" id="3.20.20.70:FF:000043">
    <property type="entry name" value="D-tagatose-1,6-bisphosphate aldolase subunit GatY"/>
    <property type="match status" value="1"/>
</dbReference>
<dbReference type="Gene3D" id="3.20.20.70">
    <property type="entry name" value="Aldolase class I"/>
    <property type="match status" value="1"/>
</dbReference>
<dbReference type="HAMAP" id="MF_01293">
    <property type="entry name" value="TagBP_aldolase_KbaY"/>
    <property type="match status" value="1"/>
</dbReference>
<dbReference type="InterPro" id="IPR013785">
    <property type="entry name" value="Aldolase_TIM"/>
</dbReference>
<dbReference type="InterPro" id="IPR050246">
    <property type="entry name" value="Class_II_FBP_aldolase"/>
</dbReference>
<dbReference type="InterPro" id="IPR000771">
    <property type="entry name" value="FBA_II"/>
</dbReference>
<dbReference type="InterPro" id="IPR023788">
    <property type="entry name" value="TagBP_ald_KbaY"/>
</dbReference>
<dbReference type="InterPro" id="IPR011288">
    <property type="entry name" value="TagBP_ald_KbaY/GatY"/>
</dbReference>
<dbReference type="NCBIfam" id="TIGR00167">
    <property type="entry name" value="cbbA"/>
    <property type="match status" value="1"/>
</dbReference>
<dbReference type="NCBIfam" id="NF006626">
    <property type="entry name" value="PRK09195.1"/>
    <property type="match status" value="1"/>
</dbReference>
<dbReference type="NCBIfam" id="NF009374">
    <property type="entry name" value="PRK12737.1"/>
    <property type="match status" value="1"/>
</dbReference>
<dbReference type="NCBIfam" id="NF009375">
    <property type="entry name" value="PRK12738.1"/>
    <property type="match status" value="1"/>
</dbReference>
<dbReference type="NCBIfam" id="TIGR01858">
    <property type="entry name" value="tag_bisphos_ald"/>
    <property type="match status" value="1"/>
</dbReference>
<dbReference type="PANTHER" id="PTHR30304">
    <property type="entry name" value="D-TAGATOSE-1,6-BISPHOSPHATE ALDOLASE"/>
    <property type="match status" value="1"/>
</dbReference>
<dbReference type="PANTHER" id="PTHR30304:SF0">
    <property type="entry name" value="D-TAGATOSE-1,6-BISPHOSPHATE ALDOLASE SUBUNIT GATY-RELATED"/>
    <property type="match status" value="1"/>
</dbReference>
<dbReference type="Pfam" id="PF01116">
    <property type="entry name" value="F_bP_aldolase"/>
    <property type="match status" value="1"/>
</dbReference>
<dbReference type="PIRSF" id="PIRSF001359">
    <property type="entry name" value="F_bP_aldolase_II"/>
    <property type="match status" value="1"/>
</dbReference>
<dbReference type="SUPFAM" id="SSF51569">
    <property type="entry name" value="Aldolase"/>
    <property type="match status" value="1"/>
</dbReference>
<dbReference type="PROSITE" id="PS00602">
    <property type="entry name" value="ALDOLASE_CLASS_II_1"/>
    <property type="match status" value="1"/>
</dbReference>
<dbReference type="PROSITE" id="PS00806">
    <property type="entry name" value="ALDOLASE_CLASS_II_2"/>
    <property type="match status" value="1"/>
</dbReference>
<sequence length="286" mass="31294">MSIISTKYLLQDAQANGYAVPAFNIHNAETIQAILEVCSEMRSPVILAGTPGTFKHIALEEIYALCSAYSTTYNMPLALHLDHHESLDDIRRKVHAGVRSAMIDGSHFPFAENVKLVKSVVDFCHSQDCSVEAELGRLGGVEDDMSVDAESAFLTDPQEAKRFVELTGVDSLAVAIGTAHGLYSKTPKIDFQRLAEIREVVDVPLVLHGASDVPDEFVRRTIELGVTKVNVATELKIAFAGAVKAWFAENPQGNDPRYYMRVGMDAMKEVVRNKINVCGSANRISA</sequence>
<accession>B7M045</accession>
<organism>
    <name type="scientific">Escherichia coli O8 (strain IAI1)</name>
    <dbReference type="NCBI Taxonomy" id="585034"/>
    <lineage>
        <taxon>Bacteria</taxon>
        <taxon>Pseudomonadati</taxon>
        <taxon>Pseudomonadota</taxon>
        <taxon>Gammaproteobacteria</taxon>
        <taxon>Enterobacterales</taxon>
        <taxon>Enterobacteriaceae</taxon>
        <taxon>Escherichia</taxon>
    </lineage>
</organism>
<protein>
    <recommendedName>
        <fullName evidence="1">D-tagatose-1,6-bisphosphate aldolase subunit KbaY</fullName>
        <shortName evidence="1">TBPA</shortName>
        <shortName evidence="1">TagBP aldolase</shortName>
        <ecNumber evidence="1">4.1.2.40</ecNumber>
    </recommendedName>
    <alternativeName>
        <fullName evidence="1">D-tagatose-bisphosphate aldolase class II</fullName>
    </alternativeName>
    <alternativeName>
        <fullName evidence="1">Ketose 1,6-bisphosphate aldolase class II</fullName>
    </alternativeName>
    <alternativeName>
        <fullName evidence="1">Tagatose-bisphosphate aldolase</fullName>
    </alternativeName>
</protein>